<feature type="chain" id="PRO_0000248653" description="Proline--tRNA ligase">
    <location>
        <begin position="1"/>
        <end position="581"/>
    </location>
</feature>
<protein>
    <recommendedName>
        <fullName evidence="1">Proline--tRNA ligase</fullName>
        <ecNumber evidence="1">6.1.1.15</ecNumber>
    </recommendedName>
    <alternativeName>
        <fullName evidence="1">Prolyl-tRNA synthetase</fullName>
        <shortName evidence="1">ProRS</shortName>
    </alternativeName>
</protein>
<dbReference type="EC" id="6.1.1.15" evidence="1"/>
<dbReference type="EMBL" id="CP000016">
    <property type="protein sequence ID" value="AAZ40928.1"/>
    <property type="molecule type" value="Genomic_DNA"/>
</dbReference>
<dbReference type="RefSeq" id="WP_011282835.1">
    <property type="nucleotide sequence ID" value="NC_007292.1"/>
</dbReference>
<dbReference type="SMR" id="Q493B4"/>
<dbReference type="STRING" id="291272.BPEN_297"/>
<dbReference type="KEGG" id="bpn:BPEN_297"/>
<dbReference type="eggNOG" id="COG0442">
    <property type="taxonomic scope" value="Bacteria"/>
</dbReference>
<dbReference type="HOGENOM" id="CLU_016739_0_0_6"/>
<dbReference type="OrthoDB" id="9809052at2"/>
<dbReference type="Proteomes" id="UP000007794">
    <property type="component" value="Chromosome"/>
</dbReference>
<dbReference type="GO" id="GO:0005829">
    <property type="term" value="C:cytosol"/>
    <property type="evidence" value="ECO:0007669"/>
    <property type="project" value="TreeGrafter"/>
</dbReference>
<dbReference type="GO" id="GO:0002161">
    <property type="term" value="F:aminoacyl-tRNA deacylase activity"/>
    <property type="evidence" value="ECO:0007669"/>
    <property type="project" value="InterPro"/>
</dbReference>
<dbReference type="GO" id="GO:0005524">
    <property type="term" value="F:ATP binding"/>
    <property type="evidence" value="ECO:0007669"/>
    <property type="project" value="UniProtKB-UniRule"/>
</dbReference>
<dbReference type="GO" id="GO:0004827">
    <property type="term" value="F:proline-tRNA ligase activity"/>
    <property type="evidence" value="ECO:0007669"/>
    <property type="project" value="UniProtKB-UniRule"/>
</dbReference>
<dbReference type="GO" id="GO:0006433">
    <property type="term" value="P:prolyl-tRNA aminoacylation"/>
    <property type="evidence" value="ECO:0007669"/>
    <property type="project" value="UniProtKB-UniRule"/>
</dbReference>
<dbReference type="CDD" id="cd04334">
    <property type="entry name" value="ProRS-INS"/>
    <property type="match status" value="1"/>
</dbReference>
<dbReference type="CDD" id="cd00861">
    <property type="entry name" value="ProRS_anticodon_short"/>
    <property type="match status" value="1"/>
</dbReference>
<dbReference type="CDD" id="cd00779">
    <property type="entry name" value="ProRS_core_prok"/>
    <property type="match status" value="1"/>
</dbReference>
<dbReference type="Gene3D" id="3.40.50.800">
    <property type="entry name" value="Anticodon-binding domain"/>
    <property type="match status" value="1"/>
</dbReference>
<dbReference type="Gene3D" id="3.30.930.10">
    <property type="entry name" value="Bira Bifunctional Protein, Domain 2"/>
    <property type="match status" value="2"/>
</dbReference>
<dbReference type="Gene3D" id="3.90.960.10">
    <property type="entry name" value="YbaK/aminoacyl-tRNA synthetase-associated domain"/>
    <property type="match status" value="1"/>
</dbReference>
<dbReference type="HAMAP" id="MF_01569">
    <property type="entry name" value="Pro_tRNA_synth_type1"/>
    <property type="match status" value="1"/>
</dbReference>
<dbReference type="InterPro" id="IPR002314">
    <property type="entry name" value="aa-tRNA-synt_IIb"/>
</dbReference>
<dbReference type="InterPro" id="IPR006195">
    <property type="entry name" value="aa-tRNA-synth_II"/>
</dbReference>
<dbReference type="InterPro" id="IPR045864">
    <property type="entry name" value="aa-tRNA-synth_II/BPL/LPL"/>
</dbReference>
<dbReference type="InterPro" id="IPR004154">
    <property type="entry name" value="Anticodon-bd"/>
</dbReference>
<dbReference type="InterPro" id="IPR036621">
    <property type="entry name" value="Anticodon-bd_dom_sf"/>
</dbReference>
<dbReference type="InterPro" id="IPR002316">
    <property type="entry name" value="Pro-tRNA-ligase_IIa"/>
</dbReference>
<dbReference type="InterPro" id="IPR004500">
    <property type="entry name" value="Pro-tRNA-synth_IIa_bac-type"/>
</dbReference>
<dbReference type="InterPro" id="IPR023717">
    <property type="entry name" value="Pro-tRNA-Synthase_IIa_type1"/>
</dbReference>
<dbReference type="InterPro" id="IPR050062">
    <property type="entry name" value="Pro-tRNA_synthetase"/>
</dbReference>
<dbReference type="InterPro" id="IPR044140">
    <property type="entry name" value="ProRS_anticodon_short"/>
</dbReference>
<dbReference type="InterPro" id="IPR033730">
    <property type="entry name" value="ProRS_core_prok"/>
</dbReference>
<dbReference type="InterPro" id="IPR036754">
    <property type="entry name" value="YbaK/aa-tRNA-synt-asso_dom_sf"/>
</dbReference>
<dbReference type="InterPro" id="IPR007214">
    <property type="entry name" value="YbaK/aa-tRNA-synth-assoc-dom"/>
</dbReference>
<dbReference type="NCBIfam" id="NF006625">
    <property type="entry name" value="PRK09194.1"/>
    <property type="match status" value="1"/>
</dbReference>
<dbReference type="NCBIfam" id="TIGR00409">
    <property type="entry name" value="proS_fam_II"/>
    <property type="match status" value="1"/>
</dbReference>
<dbReference type="PANTHER" id="PTHR42753">
    <property type="entry name" value="MITOCHONDRIAL RIBOSOME PROTEIN L39/PROLYL-TRNA LIGASE FAMILY MEMBER"/>
    <property type="match status" value="1"/>
</dbReference>
<dbReference type="PANTHER" id="PTHR42753:SF2">
    <property type="entry name" value="PROLINE--TRNA LIGASE"/>
    <property type="match status" value="1"/>
</dbReference>
<dbReference type="Pfam" id="PF03129">
    <property type="entry name" value="HGTP_anticodon"/>
    <property type="match status" value="1"/>
</dbReference>
<dbReference type="Pfam" id="PF00587">
    <property type="entry name" value="tRNA-synt_2b"/>
    <property type="match status" value="1"/>
</dbReference>
<dbReference type="Pfam" id="PF04073">
    <property type="entry name" value="tRNA_edit"/>
    <property type="match status" value="1"/>
</dbReference>
<dbReference type="PRINTS" id="PR01046">
    <property type="entry name" value="TRNASYNTHPRO"/>
</dbReference>
<dbReference type="SUPFAM" id="SSF52954">
    <property type="entry name" value="Class II aaRS ABD-related"/>
    <property type="match status" value="1"/>
</dbReference>
<dbReference type="SUPFAM" id="SSF55681">
    <property type="entry name" value="Class II aaRS and biotin synthetases"/>
    <property type="match status" value="1"/>
</dbReference>
<dbReference type="SUPFAM" id="SSF55826">
    <property type="entry name" value="YbaK/ProRS associated domain"/>
    <property type="match status" value="1"/>
</dbReference>
<dbReference type="PROSITE" id="PS50862">
    <property type="entry name" value="AA_TRNA_LIGASE_II"/>
    <property type="match status" value="1"/>
</dbReference>
<gene>
    <name evidence="1" type="primary">proS</name>
    <name type="ordered locus">BPEN_297</name>
</gene>
<accession>Q493B4</accession>
<keyword id="KW-0030">Aminoacyl-tRNA synthetase</keyword>
<keyword id="KW-0067">ATP-binding</keyword>
<keyword id="KW-0963">Cytoplasm</keyword>
<keyword id="KW-0436">Ligase</keyword>
<keyword id="KW-0547">Nucleotide-binding</keyword>
<keyword id="KW-0648">Protein biosynthesis</keyword>
<keyword id="KW-1185">Reference proteome</keyword>
<evidence type="ECO:0000255" key="1">
    <source>
        <dbReference type="HAMAP-Rule" id="MF_01569"/>
    </source>
</evidence>
<sequence>MRTSQYLLATLKEAPKNCKAISHQLMLRAGLIRQVSSGLYTWLPTGLRVLRKIENIIREEMSKIGAIEIAMPIVQPARLWKKSGRWTGYGTELLRFKNRNNQEFVLGPTHEEMVSEIICKETMLYKQFPLIVYQIHTKYRDEARPRSGVIRAREFIMKDGYSFHINQKSLQNTYNNMYQTYHTIFNRIGLNFCVVQAEPGKIGGALSHEFQAYSENGEDSIAVPMIPDNNLIDFQLSNDVIPIKIQPKTAVETMQLIAAPNIRSVEELINQFNLPIHQFVKTIIVRAKNKHINNDYSLLGLVIRADHQISLKKIAMIPQIHIPLSCIEPEEIQKITGAQPNLLGPINLSIPLIIDYNVAKMNDFVAGSNMSGKYFFGVNWNRDILFSKVADLHEVLHHNSYTNKKNILSIHNCIEIGHIFQLGQKYLNLHTNYSQKNNEHKHNLSMEMGCYGIGITRIIAVIIEQNYDKNGILWPDVIAPFKLAIIPIDMYRSVNVRNIAEKIYTQLLSVIGIDILIDDRKEYPGTMFADIDLIGIPHILIISDRSLANQEVEYKYRKKNKIEKIKLEMLIRYLIEKIVSS</sequence>
<comment type="function">
    <text evidence="1">Catalyzes the attachment of proline to tRNA(Pro) in a two-step reaction: proline is first activated by ATP to form Pro-AMP and then transferred to the acceptor end of tRNA(Pro). As ProRS can inadvertently accommodate and process non-cognate amino acids such as alanine and cysteine, to avoid such errors it has two additional distinct editing activities against alanine. One activity is designated as 'pretransfer' editing and involves the tRNA(Pro)-independent hydrolysis of activated Ala-AMP. The other activity is designated 'posttransfer' editing and involves deacylation of mischarged Ala-tRNA(Pro). The misacylated Cys-tRNA(Pro) is not edited by ProRS.</text>
</comment>
<comment type="catalytic activity">
    <reaction evidence="1">
        <text>tRNA(Pro) + L-proline + ATP = L-prolyl-tRNA(Pro) + AMP + diphosphate</text>
        <dbReference type="Rhea" id="RHEA:14305"/>
        <dbReference type="Rhea" id="RHEA-COMP:9700"/>
        <dbReference type="Rhea" id="RHEA-COMP:9702"/>
        <dbReference type="ChEBI" id="CHEBI:30616"/>
        <dbReference type="ChEBI" id="CHEBI:33019"/>
        <dbReference type="ChEBI" id="CHEBI:60039"/>
        <dbReference type="ChEBI" id="CHEBI:78442"/>
        <dbReference type="ChEBI" id="CHEBI:78532"/>
        <dbReference type="ChEBI" id="CHEBI:456215"/>
        <dbReference type="EC" id="6.1.1.15"/>
    </reaction>
</comment>
<comment type="subunit">
    <text evidence="1">Homodimer.</text>
</comment>
<comment type="subcellular location">
    <subcellularLocation>
        <location evidence="1">Cytoplasm</location>
    </subcellularLocation>
</comment>
<comment type="domain">
    <text evidence="1">Consists of three domains: the N-terminal catalytic domain, the editing domain and the C-terminal anticodon-binding domain.</text>
</comment>
<comment type="similarity">
    <text evidence="1">Belongs to the class-II aminoacyl-tRNA synthetase family. ProS type 1 subfamily.</text>
</comment>
<organism>
    <name type="scientific">Blochmanniella pennsylvanica (strain BPEN)</name>
    <dbReference type="NCBI Taxonomy" id="291272"/>
    <lineage>
        <taxon>Bacteria</taxon>
        <taxon>Pseudomonadati</taxon>
        <taxon>Pseudomonadota</taxon>
        <taxon>Gammaproteobacteria</taxon>
        <taxon>Enterobacterales</taxon>
        <taxon>Enterobacteriaceae</taxon>
        <taxon>ant endosymbionts</taxon>
        <taxon>Candidatus Blochmanniella</taxon>
    </lineage>
</organism>
<name>SYP_BLOPB</name>
<reference key="1">
    <citation type="journal article" date="2005" name="Genome Res.">
        <title>Genome sequence of Blochmannia pennsylvanicus indicates parallel evolutionary trends among bacterial mutualists of insects.</title>
        <authorList>
            <person name="Degnan P.H."/>
            <person name="Lazarus A.B."/>
            <person name="Wernegreen J.J."/>
        </authorList>
    </citation>
    <scope>NUCLEOTIDE SEQUENCE [LARGE SCALE GENOMIC DNA]</scope>
    <source>
        <strain>BPEN</strain>
    </source>
</reference>
<proteinExistence type="inferred from homology"/>